<organism>
    <name type="scientific">Arabidopsis thaliana</name>
    <name type="common">Mouse-ear cress</name>
    <dbReference type="NCBI Taxonomy" id="3702"/>
    <lineage>
        <taxon>Eukaryota</taxon>
        <taxon>Viridiplantae</taxon>
        <taxon>Streptophyta</taxon>
        <taxon>Embryophyta</taxon>
        <taxon>Tracheophyta</taxon>
        <taxon>Spermatophyta</taxon>
        <taxon>Magnoliopsida</taxon>
        <taxon>eudicotyledons</taxon>
        <taxon>Gunneridae</taxon>
        <taxon>Pentapetalae</taxon>
        <taxon>rosids</taxon>
        <taxon>malvids</taxon>
        <taxon>Brassicales</taxon>
        <taxon>Brassicaceae</taxon>
        <taxon>Camelineae</taxon>
        <taxon>Arabidopsis</taxon>
    </lineage>
</organism>
<sequence>MASAAVASMVLDPKASPALMDLSTADEEDLYGRLKSLERQLEFTDIQEEYVKDEQKNLKRELLRAQEEVKRIQSVPLVIGQFMEMVDQNNGIVGSTTGSNYYVRILSTINRELLKPSASVALHRHSNALVDVLPPEADSSISLLSQSEKPDVSYNDIGGCDIQKQEIREAVELPLTHHELYKQIGIDPPRGVLLYGPPGTGKTMLAKAVANHTTAAFIRVVGSEFVQKYLGEGPRMVRDVFRLAKENAPAIIFIDEVDAIATARFDAQTGADREVQRILMELLNQMDGFDQTVNVKVIMATNRADTLDPALLRPGRLDRKIEFPLPDRRQKRLVFQVCTSKMNLSDEVDLEDYVSRPDKISAAEIAAICQEAGMHAVRKNRYVILPKDFEKGYRANVKKPDTDFEFYK</sequence>
<dbReference type="EMBL" id="AF123392">
    <property type="protein sequence ID" value="AAF22523.1"/>
    <property type="molecule type" value="mRNA"/>
</dbReference>
<dbReference type="EMBL" id="AB019228">
    <property type="protein sequence ID" value="BAA96920.1"/>
    <property type="molecule type" value="Genomic_DNA"/>
</dbReference>
<dbReference type="EMBL" id="CP002688">
    <property type="protein sequence ID" value="AED97029.1"/>
    <property type="molecule type" value="Genomic_DNA"/>
</dbReference>
<dbReference type="EMBL" id="AY070466">
    <property type="protein sequence ID" value="AAL49932.1"/>
    <property type="molecule type" value="mRNA"/>
</dbReference>
<dbReference type="EMBL" id="BT020373">
    <property type="protein sequence ID" value="AAV85728.1"/>
    <property type="molecule type" value="mRNA"/>
</dbReference>
<dbReference type="RefSeq" id="NP_200637.1">
    <property type="nucleotide sequence ID" value="NM_125214.6"/>
</dbReference>
<dbReference type="SMR" id="Q9SEI4"/>
<dbReference type="BioGRID" id="21185">
    <property type="interactions" value="173"/>
</dbReference>
<dbReference type="FunCoup" id="Q9SEI4">
    <property type="interactions" value="4794"/>
</dbReference>
<dbReference type="IntAct" id="Q9SEI4">
    <property type="interactions" value="7"/>
</dbReference>
<dbReference type="STRING" id="3702.Q9SEI4"/>
<dbReference type="iPTMnet" id="Q9SEI4"/>
<dbReference type="MetOSite" id="Q9SEI4"/>
<dbReference type="PaxDb" id="3702-AT5G58290.1"/>
<dbReference type="ProteomicsDB" id="226295"/>
<dbReference type="EnsemblPlants" id="AT5G58290.1">
    <property type="protein sequence ID" value="AT5G58290.1"/>
    <property type="gene ID" value="AT5G58290"/>
</dbReference>
<dbReference type="GeneID" id="835941"/>
<dbReference type="Gramene" id="AT5G58290.1">
    <property type="protein sequence ID" value="AT5G58290.1"/>
    <property type="gene ID" value="AT5G58290"/>
</dbReference>
<dbReference type="KEGG" id="ath:AT5G58290"/>
<dbReference type="Araport" id="AT5G58290"/>
<dbReference type="TAIR" id="AT5G58290">
    <property type="gene designation" value="RPT3"/>
</dbReference>
<dbReference type="eggNOG" id="KOG0727">
    <property type="taxonomic scope" value="Eukaryota"/>
</dbReference>
<dbReference type="HOGENOM" id="CLU_000688_2_0_1"/>
<dbReference type="InParanoid" id="Q9SEI4"/>
<dbReference type="OMA" id="QDIGGMD"/>
<dbReference type="OrthoDB" id="10255768at2759"/>
<dbReference type="PhylomeDB" id="Q9SEI4"/>
<dbReference type="BRENDA" id="5.6.1.5">
    <property type="organism ID" value="399"/>
</dbReference>
<dbReference type="PRO" id="PR:Q9SEI4"/>
<dbReference type="Proteomes" id="UP000006548">
    <property type="component" value="Chromosome 5"/>
</dbReference>
<dbReference type="ExpressionAtlas" id="Q9SEI4">
    <property type="expression patterns" value="baseline and differential"/>
</dbReference>
<dbReference type="GO" id="GO:0005737">
    <property type="term" value="C:cytoplasm"/>
    <property type="evidence" value="ECO:0007669"/>
    <property type="project" value="UniProtKB-SubCell"/>
</dbReference>
<dbReference type="GO" id="GO:0005634">
    <property type="term" value="C:nucleus"/>
    <property type="evidence" value="ECO:0000304"/>
    <property type="project" value="TAIR"/>
</dbReference>
<dbReference type="GO" id="GO:0009505">
    <property type="term" value="C:plant-type cell wall"/>
    <property type="evidence" value="ECO:0007005"/>
    <property type="project" value="TAIR"/>
</dbReference>
<dbReference type="GO" id="GO:0009506">
    <property type="term" value="C:plasmodesma"/>
    <property type="evidence" value="ECO:0007005"/>
    <property type="project" value="TAIR"/>
</dbReference>
<dbReference type="GO" id="GO:0000502">
    <property type="term" value="C:proteasome complex"/>
    <property type="evidence" value="ECO:0000314"/>
    <property type="project" value="TAIR"/>
</dbReference>
<dbReference type="GO" id="GO:0005524">
    <property type="term" value="F:ATP binding"/>
    <property type="evidence" value="ECO:0007669"/>
    <property type="project" value="UniProtKB-KW"/>
</dbReference>
<dbReference type="GO" id="GO:0016887">
    <property type="term" value="F:ATP hydrolysis activity"/>
    <property type="evidence" value="ECO:0007669"/>
    <property type="project" value="InterPro"/>
</dbReference>
<dbReference type="CDD" id="cd19502">
    <property type="entry name" value="RecA-like_PAN_like"/>
    <property type="match status" value="1"/>
</dbReference>
<dbReference type="FunFam" id="1.10.8.60:FF:000018">
    <property type="entry name" value="26S protease regulatory subunit 6B"/>
    <property type="match status" value="1"/>
</dbReference>
<dbReference type="FunFam" id="2.40.50.140:FF:000046">
    <property type="entry name" value="26S protease regulatory subunit 6B"/>
    <property type="match status" value="1"/>
</dbReference>
<dbReference type="FunFam" id="3.40.50.300:FF:000033">
    <property type="entry name" value="26S protease regulatory subunit 6B"/>
    <property type="match status" value="1"/>
</dbReference>
<dbReference type="Gene3D" id="1.10.8.60">
    <property type="match status" value="1"/>
</dbReference>
<dbReference type="Gene3D" id="2.40.50.140">
    <property type="entry name" value="Nucleic acid-binding proteins"/>
    <property type="match status" value="1"/>
</dbReference>
<dbReference type="Gene3D" id="3.40.50.300">
    <property type="entry name" value="P-loop containing nucleotide triphosphate hydrolases"/>
    <property type="match status" value="1"/>
</dbReference>
<dbReference type="InterPro" id="IPR050221">
    <property type="entry name" value="26S_Proteasome_ATPase"/>
</dbReference>
<dbReference type="InterPro" id="IPR003593">
    <property type="entry name" value="AAA+_ATPase"/>
</dbReference>
<dbReference type="InterPro" id="IPR041569">
    <property type="entry name" value="AAA_lid_3"/>
</dbReference>
<dbReference type="InterPro" id="IPR003959">
    <property type="entry name" value="ATPase_AAA_core"/>
</dbReference>
<dbReference type="InterPro" id="IPR003960">
    <property type="entry name" value="ATPase_AAA_CS"/>
</dbReference>
<dbReference type="InterPro" id="IPR012340">
    <property type="entry name" value="NA-bd_OB-fold"/>
</dbReference>
<dbReference type="InterPro" id="IPR027417">
    <property type="entry name" value="P-loop_NTPase"/>
</dbReference>
<dbReference type="InterPro" id="IPR032501">
    <property type="entry name" value="Prot_ATP_ID_OB_2nd"/>
</dbReference>
<dbReference type="PANTHER" id="PTHR23073">
    <property type="entry name" value="26S PROTEASOME REGULATORY SUBUNIT"/>
    <property type="match status" value="1"/>
</dbReference>
<dbReference type="Pfam" id="PF00004">
    <property type="entry name" value="AAA"/>
    <property type="match status" value="1"/>
</dbReference>
<dbReference type="Pfam" id="PF17862">
    <property type="entry name" value="AAA_lid_3"/>
    <property type="match status" value="1"/>
</dbReference>
<dbReference type="Pfam" id="PF16450">
    <property type="entry name" value="Prot_ATP_ID_OB_C"/>
    <property type="match status" value="1"/>
</dbReference>
<dbReference type="SMART" id="SM00382">
    <property type="entry name" value="AAA"/>
    <property type="match status" value="1"/>
</dbReference>
<dbReference type="SUPFAM" id="SSF52540">
    <property type="entry name" value="P-loop containing nucleoside triphosphate hydrolases"/>
    <property type="match status" value="1"/>
</dbReference>
<dbReference type="PROSITE" id="PS00674">
    <property type="entry name" value="AAA"/>
    <property type="match status" value="1"/>
</dbReference>
<comment type="function">
    <text evidence="4">The 26S proteasome is involved in the ATP-dependent degradation of ubiquitinated proteins. The regulatory (or ATPase) complex confers ATP dependency and substrate specificity to the 26S complex.</text>
</comment>
<comment type="subunit">
    <text evidence="3 5">Component of the 19S regulatory particle (RP/PA700) base subcomplex of the 26S proteasome. The 26S proteasome is composed of a core protease (CP), known as the 20S proteasome, capped at one or both ends by the 19S regulatory particle (RP/PA700). The RP/PA700 complex is composed of at least 17 different subunits in two subcomplexes, the base and the lid, which form the portions proximal and distal to the 20S proteolytic core, respectively.</text>
</comment>
<comment type="subcellular location">
    <subcellularLocation>
        <location evidence="1">Cytoplasm</location>
    </subcellularLocation>
    <subcellularLocation>
        <location evidence="1">Nucleus</location>
    </subcellularLocation>
</comment>
<comment type="tissue specificity">
    <text>Expressed in dark-grown etiolated seedlings, roots, leaves, stems and flowers.</text>
</comment>
<comment type="similarity">
    <text evidence="6">Belongs to the AAA ATPase family.</text>
</comment>
<feature type="initiator methionine" description="Removed" evidence="8">
    <location>
        <position position="1"/>
    </location>
</feature>
<feature type="chain" id="PRO_0000084692" description="26S proteasome regulatory subunit 6B homolog">
    <location>
        <begin position="2"/>
        <end position="408"/>
    </location>
</feature>
<feature type="coiled-coil region" evidence="2">
    <location>
        <begin position="28"/>
        <end position="75"/>
    </location>
</feature>
<feature type="binding site" evidence="2">
    <location>
        <begin position="196"/>
        <end position="203"/>
    </location>
    <ligand>
        <name>ATP</name>
        <dbReference type="ChEBI" id="CHEBI:30616"/>
    </ligand>
</feature>
<feature type="modified residue" description="N-acetylalanine" evidence="8">
    <location>
        <position position="2"/>
    </location>
</feature>
<feature type="modified residue" description="Phosphoserine" evidence="7">
    <location>
        <position position="16"/>
    </location>
</feature>
<feature type="mutagenesis site" description="Impairs the light-specific hypocotyl elongation response elicited by a glutamate receptor agonist, BMAA." evidence="4">
    <original>G</original>
    <variation>E</variation>
    <location>
        <position position="158"/>
    </location>
</feature>
<proteinExistence type="evidence at protein level"/>
<gene>
    <name type="primary">RPT3</name>
    <name type="synonym">BIM409</name>
    <name type="ordered locus">At5g58290</name>
    <name type="ORF">MCK7.16</name>
</gene>
<protein>
    <recommendedName>
        <fullName>26S proteasome regulatory subunit 6B homolog</fullName>
    </recommendedName>
    <alternativeName>
        <fullName>26S protease subunit 6B homolog</fullName>
    </alternativeName>
    <alternativeName>
        <fullName>26S proteasome AAA-ATPase subunit RPT3</fullName>
    </alternativeName>
    <alternativeName>
        <fullName>Protein BMAA insensitive morphology 409</fullName>
    </alternativeName>
    <alternativeName>
        <fullName>Regulatory particle triple-A ATPase subunit 3</fullName>
    </alternativeName>
</protein>
<keyword id="KW-0007">Acetylation</keyword>
<keyword id="KW-0067">ATP-binding</keyword>
<keyword id="KW-0175">Coiled coil</keyword>
<keyword id="KW-0963">Cytoplasm</keyword>
<keyword id="KW-0547">Nucleotide-binding</keyword>
<keyword id="KW-0539">Nucleus</keyword>
<keyword id="KW-0597">Phosphoprotein</keyword>
<keyword id="KW-0647">Proteasome</keyword>
<keyword id="KW-1185">Reference proteome</keyword>
<accession>Q9SEI4</accession>
<accession>Q5PNS4</accession>
<evidence type="ECO:0000250" key="1"/>
<evidence type="ECO:0000255" key="2"/>
<evidence type="ECO:0000269" key="3">
    <source>
    </source>
</evidence>
<evidence type="ECO:0000269" key="4">
    <source>
    </source>
</evidence>
<evidence type="ECO:0000269" key="5">
    <source>
    </source>
</evidence>
<evidence type="ECO:0000305" key="6"/>
<evidence type="ECO:0007744" key="7">
    <source>
    </source>
</evidence>
<evidence type="ECO:0007744" key="8">
    <source>
    </source>
</evidence>
<name>PRS6B_ARATH</name>
<reference key="1">
    <citation type="journal article" date="1999" name="Plant J.">
        <title>Structural and functional analysis of the six regulatory particle triple-A ATPase subunits from the Arabidopsis 26S proteasome.</title>
        <authorList>
            <person name="Fu H."/>
            <person name="Doelling J.H."/>
            <person name="Rubin D.M."/>
            <person name="Vierstra R.D."/>
        </authorList>
    </citation>
    <scope>NUCLEOTIDE SEQUENCE [MRNA]</scope>
    <scope>GENE FAMILY</scope>
    <scope>NOMENCLATURE</scope>
    <source>
        <strain>cv. Columbia</strain>
    </source>
</reference>
<reference key="2">
    <citation type="journal article" date="2000" name="DNA Res.">
        <title>Structural analysis of Arabidopsis thaliana chromosome 5. X. Sequence features of the regions of 3,076,755 bp covered by sixty P1 and TAC clones.</title>
        <authorList>
            <person name="Sato S."/>
            <person name="Nakamura Y."/>
            <person name="Kaneko T."/>
            <person name="Katoh T."/>
            <person name="Asamizu E."/>
            <person name="Kotani H."/>
            <person name="Tabata S."/>
        </authorList>
    </citation>
    <scope>NUCLEOTIDE SEQUENCE [LARGE SCALE GENOMIC DNA]</scope>
    <source>
        <strain>cv. Columbia</strain>
    </source>
</reference>
<reference key="3">
    <citation type="journal article" date="2017" name="Plant J.">
        <title>Araport11: a complete reannotation of the Arabidopsis thaliana reference genome.</title>
        <authorList>
            <person name="Cheng C.Y."/>
            <person name="Krishnakumar V."/>
            <person name="Chan A.P."/>
            <person name="Thibaud-Nissen F."/>
            <person name="Schobel S."/>
            <person name="Town C.D."/>
        </authorList>
    </citation>
    <scope>GENOME REANNOTATION</scope>
    <source>
        <strain>cv. Columbia</strain>
    </source>
</reference>
<reference key="4">
    <citation type="journal article" date="2003" name="Science">
        <title>Empirical analysis of transcriptional activity in the Arabidopsis genome.</title>
        <authorList>
            <person name="Yamada K."/>
            <person name="Lim J."/>
            <person name="Dale J.M."/>
            <person name="Chen H."/>
            <person name="Shinn P."/>
            <person name="Palm C.J."/>
            <person name="Southwick A.M."/>
            <person name="Wu H.C."/>
            <person name="Kim C.J."/>
            <person name="Nguyen M."/>
            <person name="Pham P.K."/>
            <person name="Cheuk R.F."/>
            <person name="Karlin-Newmann G."/>
            <person name="Liu S.X."/>
            <person name="Lam B."/>
            <person name="Sakano H."/>
            <person name="Wu T."/>
            <person name="Yu G."/>
            <person name="Miranda M."/>
            <person name="Quach H.L."/>
            <person name="Tripp M."/>
            <person name="Chang C.H."/>
            <person name="Lee J.M."/>
            <person name="Toriumi M.J."/>
            <person name="Chan M.M."/>
            <person name="Tang C.C."/>
            <person name="Onodera C.S."/>
            <person name="Deng J.M."/>
            <person name="Akiyama K."/>
            <person name="Ansari Y."/>
            <person name="Arakawa T."/>
            <person name="Banh J."/>
            <person name="Banno F."/>
            <person name="Bowser L."/>
            <person name="Brooks S.Y."/>
            <person name="Carninci P."/>
            <person name="Chao Q."/>
            <person name="Choy N."/>
            <person name="Enju A."/>
            <person name="Goldsmith A.D."/>
            <person name="Gurjal M."/>
            <person name="Hansen N.F."/>
            <person name="Hayashizaki Y."/>
            <person name="Johnson-Hopson C."/>
            <person name="Hsuan V.W."/>
            <person name="Iida K."/>
            <person name="Karnes M."/>
            <person name="Khan S."/>
            <person name="Koesema E."/>
            <person name="Ishida J."/>
            <person name="Jiang P.X."/>
            <person name="Jones T."/>
            <person name="Kawai J."/>
            <person name="Kamiya A."/>
            <person name="Meyers C."/>
            <person name="Nakajima M."/>
            <person name="Narusaka M."/>
            <person name="Seki M."/>
            <person name="Sakurai T."/>
            <person name="Satou M."/>
            <person name="Tamse R."/>
            <person name="Vaysberg M."/>
            <person name="Wallender E.K."/>
            <person name="Wong C."/>
            <person name="Yamamura Y."/>
            <person name="Yuan S."/>
            <person name="Shinozaki K."/>
            <person name="Davis R.W."/>
            <person name="Theologis A."/>
            <person name="Ecker J.R."/>
        </authorList>
    </citation>
    <scope>NUCLEOTIDE SEQUENCE [LARGE SCALE MRNA]</scope>
    <source>
        <strain>cv. Columbia</strain>
    </source>
</reference>
<reference key="5">
    <citation type="submission" date="2004-12" db="EMBL/GenBank/DDBJ databases">
        <title>Arabidopsis ORF clones.</title>
        <authorList>
            <person name="Kim C.J."/>
            <person name="Chen H."/>
            <person name="Cheuk R.F."/>
            <person name="Shinn P."/>
            <person name="Ecker J.R."/>
        </authorList>
    </citation>
    <scope>NUCLEOTIDE SEQUENCE [LARGE SCALE MRNA]</scope>
    <source>
        <strain>cv. Columbia</strain>
    </source>
</reference>
<reference key="6">
    <citation type="journal article" date="2004" name="J. Biol. Chem.">
        <title>Purification of the Arabidopsis 26 S proteasome: biochemical and molecular analyses revealed the presence of multiple isoforms.</title>
        <authorList>
            <person name="Yang P."/>
            <person name="Fu H."/>
            <person name="Walker J."/>
            <person name="Papa C.M."/>
            <person name="Smalle J."/>
            <person name="Ju Y.-M."/>
            <person name="Vierstra R.D."/>
        </authorList>
    </citation>
    <scope>SUBUNIT</scope>
    <scope>IDENTIFICATION BY MASS SPECTROMETRY</scope>
</reference>
<reference key="7">
    <citation type="journal article" date="2009" name="J. Proteomics">
        <title>Phosphoproteomic analysis of nuclei-enriched fractions from Arabidopsis thaliana.</title>
        <authorList>
            <person name="Jones A.M.E."/>
            <person name="MacLean D."/>
            <person name="Studholme D.J."/>
            <person name="Serna-Sanz A."/>
            <person name="Andreasson E."/>
            <person name="Rathjen J.P."/>
            <person name="Peck S.C."/>
        </authorList>
    </citation>
    <scope>PHOSPHORYLATION [LARGE SCALE ANALYSIS] AT SER-16</scope>
    <scope>IDENTIFICATION BY MASS SPECTROMETRY [LARGE SCALE ANALYSIS]</scope>
    <source>
        <strain>cv. Columbia</strain>
    </source>
</reference>
<reference key="8">
    <citation type="journal article" date="2009" name="Plant Mol. Biol.">
        <title>A mutation in the proteosomal regulatory particle AAA-ATPase-3 in Arabidopsis impairs the light-specific hypocotyl elongation response elicited by a glutamate receptor agonist, BMAA.</title>
        <authorList>
            <person name="Brenner E.D."/>
            <person name="Feinberg P."/>
            <person name="Runko S."/>
            <person name="Coruzzi G.M."/>
        </authorList>
    </citation>
    <scope>MUTAGENESIS OF GLY-158</scope>
    <scope>FUNCTION</scope>
</reference>
<reference key="9">
    <citation type="journal article" date="2010" name="J. Biol. Chem.">
        <title>Affinity purification of the Arabidopsis 26 S proteasome reveals a diverse array of plant proteolytic complexes.</title>
        <authorList>
            <person name="Book A.J."/>
            <person name="Gladman N.P."/>
            <person name="Lee S.S."/>
            <person name="Scalf M."/>
            <person name="Smith L.M."/>
            <person name="Vierstra R.D."/>
        </authorList>
    </citation>
    <scope>IDENTIFICATION BY MASS SPECTROMETRY</scope>
    <scope>CHARACTERIZATION OF THE 26S PROTEASOME COMPLEX</scope>
    <scope>SUBUNIT</scope>
</reference>
<reference key="10">
    <citation type="journal article" date="2012" name="Mol. Cell. Proteomics">
        <title>Comparative large-scale characterisation of plant vs. mammal proteins reveals similar and idiosyncratic N-alpha acetylation features.</title>
        <authorList>
            <person name="Bienvenut W.V."/>
            <person name="Sumpton D."/>
            <person name="Martinez A."/>
            <person name="Lilla S."/>
            <person name="Espagne C."/>
            <person name="Meinnel T."/>
            <person name="Giglione C."/>
        </authorList>
    </citation>
    <scope>ACETYLATION [LARGE SCALE ANALYSIS] AT ALA-2</scope>
    <scope>CLEAVAGE OF INITIATOR METHIONINE [LARGE SCALE ANALYSIS]</scope>
    <scope>IDENTIFICATION BY MASS SPECTROMETRY [LARGE SCALE ANALYSIS]</scope>
</reference>